<sequence>MGRAPCCEKVGIKRGRWTAEEDQILSNYIQSNGEGSWRSLPKNAGLKRCGKSCRLRWINYLRSDLKRGNITPEEEELVVKLHSTLGNRWSLIAGHLPGRTDNEIKNYWNSHLSRKLHNFIRKPSISQDVSAVIMTNASSAPPPPQAKRRLGRTSRSAMKPKIHRTKTRKTKKTSAPPEPNADVAGADKEALMVESSGAEAELGRPCDYYGDDCNKNLMSINGDNGVLTFDDDIIDLLLDESDPGHLYTNTTCGGDGELHNIRDSEGARGFSDTWNQGNLDCLLQSCPSVESFLNYDHQVNDASTDEFIDWDCVWQEGSDNNLWHEKENPDSMVSWLLDGDDEATIGNSNCENFGEPLDHDDESALVAWLLS</sequence>
<gene>
    <name evidence="12" type="primary">MYB12</name>
    <name evidence="11" type="synonym">PFG1</name>
    <name evidence="14" type="ordered locus">At2g47460</name>
    <name evidence="15" type="ORF">T30B22.24</name>
</gene>
<reference key="1">
    <citation type="journal article" date="1998" name="Plant J.">
        <title>Towards functional characterisation of the members of the R2R3-MYB gene family from Arabidopsis thaliana.</title>
        <authorList>
            <person name="Kranz H.D."/>
            <person name="Denekamp M."/>
            <person name="Greco R."/>
            <person name="Jin H.-L."/>
            <person name="Leyva A."/>
            <person name="Meissner R.C."/>
            <person name="Petroni K."/>
            <person name="Urzainqui A."/>
            <person name="Bevan M."/>
            <person name="Martin C."/>
            <person name="Smeekens S."/>
            <person name="Tonelli C."/>
            <person name="Paz-Ares J."/>
            <person name="Weisshaar B."/>
        </authorList>
    </citation>
    <scope>NUCLEOTIDE SEQUENCE [MRNA]</scope>
    <scope>TISSUE SPECIFICITY</scope>
    <scope>INDUCTION BY SUCROSE; NITROGEN DEFICIENCY AND UV LIGHT</scope>
    <scope>GENE FAMILY</scope>
    <scope>NOMENCLATURE</scope>
    <source>
        <strain>cv. Columbia</strain>
    </source>
</reference>
<reference key="2">
    <citation type="journal article" date="2005" name="Plant Physiol.">
        <title>The Arabidopsis transcription factor MYB12 is a flavonol-specific regulator of phenylpropanoid biosynthesis.</title>
        <authorList>
            <person name="Mehrtens F."/>
            <person name="Kranz H."/>
            <person name="Bednarek P."/>
            <person name="Weisshaar B."/>
        </authorList>
    </citation>
    <scope>NUCLEOTIDE SEQUENCE [GENOMIC DNA]</scope>
    <scope>FUNCTION</scope>
    <source>
        <strain>cv. Columbia</strain>
    </source>
</reference>
<reference key="3">
    <citation type="submission" date="2004-01" db="EMBL/GenBank/DDBJ databases">
        <title>The MYB transcription factor family in Arabidopsis: a genome-wide cloning and expression pattern analysis.</title>
        <authorList>
            <person name="Qu L.-J."/>
            <person name="Gu H."/>
        </authorList>
    </citation>
    <scope>NUCLEOTIDE SEQUENCE [MRNA]</scope>
</reference>
<reference key="4">
    <citation type="journal article" date="1999" name="Nature">
        <title>Sequence and analysis of chromosome 2 of the plant Arabidopsis thaliana.</title>
        <authorList>
            <person name="Lin X."/>
            <person name="Kaul S."/>
            <person name="Rounsley S.D."/>
            <person name="Shea T.P."/>
            <person name="Benito M.-I."/>
            <person name="Town C.D."/>
            <person name="Fujii C.Y."/>
            <person name="Mason T.M."/>
            <person name="Bowman C.L."/>
            <person name="Barnstead M.E."/>
            <person name="Feldblyum T.V."/>
            <person name="Buell C.R."/>
            <person name="Ketchum K.A."/>
            <person name="Lee J.J."/>
            <person name="Ronning C.M."/>
            <person name="Koo H.L."/>
            <person name="Moffat K.S."/>
            <person name="Cronin L.A."/>
            <person name="Shen M."/>
            <person name="Pai G."/>
            <person name="Van Aken S."/>
            <person name="Umayam L."/>
            <person name="Tallon L.J."/>
            <person name="Gill J.E."/>
            <person name="Adams M.D."/>
            <person name="Carrera A.J."/>
            <person name="Creasy T.H."/>
            <person name="Goodman H.M."/>
            <person name="Somerville C.R."/>
            <person name="Copenhaver G.P."/>
            <person name="Preuss D."/>
            <person name="Nierman W.C."/>
            <person name="White O."/>
            <person name="Eisen J.A."/>
            <person name="Salzberg S.L."/>
            <person name="Fraser C.M."/>
            <person name="Venter J.C."/>
        </authorList>
    </citation>
    <scope>NUCLEOTIDE SEQUENCE [LARGE SCALE GENOMIC DNA]</scope>
    <source>
        <strain>cv. Columbia</strain>
    </source>
</reference>
<reference key="5">
    <citation type="journal article" date="2017" name="Plant J.">
        <title>Araport11: a complete reannotation of the Arabidopsis thaliana reference genome.</title>
        <authorList>
            <person name="Cheng C.Y."/>
            <person name="Krishnakumar V."/>
            <person name="Chan A.P."/>
            <person name="Thibaud-Nissen F."/>
            <person name="Schobel S."/>
            <person name="Town C.D."/>
        </authorList>
    </citation>
    <scope>GENOME REANNOTATION</scope>
    <source>
        <strain>cv. Columbia</strain>
    </source>
</reference>
<reference key="6">
    <citation type="journal article" date="2003" name="Science">
        <title>Empirical analysis of transcriptional activity in the Arabidopsis genome.</title>
        <authorList>
            <person name="Yamada K."/>
            <person name="Lim J."/>
            <person name="Dale J.M."/>
            <person name="Chen H."/>
            <person name="Shinn P."/>
            <person name="Palm C.J."/>
            <person name="Southwick A.M."/>
            <person name="Wu H.C."/>
            <person name="Kim C.J."/>
            <person name="Nguyen M."/>
            <person name="Pham P.K."/>
            <person name="Cheuk R.F."/>
            <person name="Karlin-Newmann G."/>
            <person name="Liu S.X."/>
            <person name="Lam B."/>
            <person name="Sakano H."/>
            <person name="Wu T."/>
            <person name="Yu G."/>
            <person name="Miranda M."/>
            <person name="Quach H.L."/>
            <person name="Tripp M."/>
            <person name="Chang C.H."/>
            <person name="Lee J.M."/>
            <person name="Toriumi M.J."/>
            <person name="Chan M.M."/>
            <person name="Tang C.C."/>
            <person name="Onodera C.S."/>
            <person name="Deng J.M."/>
            <person name="Akiyama K."/>
            <person name="Ansari Y."/>
            <person name="Arakawa T."/>
            <person name="Banh J."/>
            <person name="Banno F."/>
            <person name="Bowser L."/>
            <person name="Brooks S.Y."/>
            <person name="Carninci P."/>
            <person name="Chao Q."/>
            <person name="Choy N."/>
            <person name="Enju A."/>
            <person name="Goldsmith A.D."/>
            <person name="Gurjal M."/>
            <person name="Hansen N.F."/>
            <person name="Hayashizaki Y."/>
            <person name="Johnson-Hopson C."/>
            <person name="Hsuan V.W."/>
            <person name="Iida K."/>
            <person name="Karnes M."/>
            <person name="Khan S."/>
            <person name="Koesema E."/>
            <person name="Ishida J."/>
            <person name="Jiang P.X."/>
            <person name="Jones T."/>
            <person name="Kawai J."/>
            <person name="Kamiya A."/>
            <person name="Meyers C."/>
            <person name="Nakajima M."/>
            <person name="Narusaka M."/>
            <person name="Seki M."/>
            <person name="Sakurai T."/>
            <person name="Satou M."/>
            <person name="Tamse R."/>
            <person name="Vaysberg M."/>
            <person name="Wallender E.K."/>
            <person name="Wong C."/>
            <person name="Yamamura Y."/>
            <person name="Yuan S."/>
            <person name="Shinozaki K."/>
            <person name="Davis R.W."/>
            <person name="Theologis A."/>
            <person name="Ecker J.R."/>
        </authorList>
    </citation>
    <scope>NUCLEOTIDE SEQUENCE [LARGE SCALE MRNA]</scope>
    <source>
        <strain>cv. Columbia</strain>
    </source>
</reference>
<reference key="7">
    <citation type="journal article" date="2001" name="Curr. Opin. Plant Biol.">
        <title>The R2R3-MYB gene family in Arabidopsis thaliana.</title>
        <authorList>
            <person name="Stracke R."/>
            <person name="Werber M."/>
            <person name="Weisshaar B."/>
        </authorList>
    </citation>
    <scope>GENE FAMILY</scope>
    <scope>NOMENCLATURE</scope>
</reference>
<reference key="8">
    <citation type="journal article" date="2006" name="Plant Mol. Biol.">
        <title>The MYB transcription factor superfamily of Arabidopsis: expression analysis and phylogenetic comparison with the rice MYB family.</title>
        <authorList>
            <person name="Chen Y."/>
            <person name="Yang X."/>
            <person name="He K."/>
            <person name="Liu M."/>
            <person name="Li J."/>
            <person name="Gao Z."/>
            <person name="Lin Z."/>
            <person name="Zhang Y."/>
            <person name="Wang X."/>
            <person name="Qiu X."/>
            <person name="Shen Y."/>
            <person name="Zhang L."/>
            <person name="Deng X."/>
            <person name="Luo J."/>
            <person name="Deng X.-W."/>
            <person name="Chen Z."/>
            <person name="Gu H."/>
            <person name="Qu L.-J."/>
        </authorList>
    </citation>
    <scope>GENE FAMILY</scope>
</reference>
<reference key="9">
    <citation type="journal article" date="2007" name="Planta">
        <title>Nitrogen deficiency enhances expression of specific MYB and bHLH transcription factors and accumulation of end products in the flavonoid pathway.</title>
        <authorList>
            <person name="Lea U.S."/>
            <person name="Slimestad R."/>
            <person name="Smedvig P."/>
            <person name="Lillo C."/>
        </authorList>
    </citation>
    <scope>INDUCTION BY NITROGEN DEFICIENCY</scope>
</reference>
<reference key="10">
    <citation type="journal article" date="2007" name="Plant J.">
        <title>Differential regulation of closely related R2R3-MYB transcription factors controls flavonol accumulation in different parts of the Arabidopsis thaliana seedling.</title>
        <authorList>
            <person name="Stracke R."/>
            <person name="Ishihara H."/>
            <person name="Huep G."/>
            <person name="Barsch A."/>
            <person name="Mehrtens F."/>
            <person name="Niehaus K."/>
            <person name="Weisshaar B."/>
        </authorList>
    </citation>
    <scope>FUNCTION</scope>
    <scope>DISRUPTION PHENOTYPE</scope>
    <scope>TISSUE SPECIFICITY</scope>
    <scope>DEVELOPMENTAL STAGE</scope>
    <source>
        <strain>cv. Columbia</strain>
    </source>
</reference>
<reference key="11">
    <citation type="journal article" date="2008" name="Plant J.">
        <title>AtMYB12 regulates caffeoyl quinic acid and flavonol synthesis in tomato: expression in fruit results in very high levels of both types of polyphenol.</title>
        <authorList>
            <person name="Luo J."/>
            <person name="Butelli E."/>
            <person name="Hill L."/>
            <person name="Parr A."/>
            <person name="Niggeweg R."/>
            <person name="Bailey P."/>
            <person name="Weisshaar B."/>
            <person name="Martin C."/>
        </authorList>
    </citation>
    <scope>BIOTECHNOLOGY</scope>
</reference>
<reference key="12">
    <citation type="journal article" date="2010" name="New Phytol.">
        <title>Analysis of PRODUCTION OF FLAVONOL GLYCOSIDES-dependent flavonol glycoside accumulation in Arabidopsis thaliana plants reveals MYB11-, MYB12- and MYB111-independent flavonol glycoside accumulation.</title>
        <authorList>
            <person name="Stracke R."/>
            <person name="Jahns O."/>
            <person name="Keck M."/>
            <person name="Tohge T."/>
            <person name="Niehaus K."/>
            <person name="Fernie A.R."/>
            <person name="Weisshaar B."/>
        </authorList>
    </citation>
    <scope>FUNCTION</scope>
    <scope>DISRUPTION PHENOTYPE</scope>
    <source>
        <strain>cv. Columbia</strain>
    </source>
</reference>
<reference key="13">
    <citation type="journal article" date="2010" name="Plant Cell Environ.">
        <title>The Arabidopsis bZIP transcription factor HY5 regulates expression of the PFG1/MYB12 gene in response to light and ultraviolet-B radiation.</title>
        <authorList>
            <person name="Stracke R."/>
            <person name="Favory J.-J."/>
            <person name="Gruber H."/>
            <person name="Bartelniewoehner L."/>
            <person name="Bartels S."/>
            <person name="Binkert M."/>
            <person name="Funk M."/>
            <person name="Weisshaar B."/>
            <person name="Ulm R."/>
        </authorList>
    </citation>
    <scope>FUNCTION</scope>
    <scope>INDUCTION BY LIGHT AND UV-B</scope>
    <scope>DISRUPTION PHENOTYPE</scope>
    <source>
        <strain>cv. Columbia</strain>
        <strain>cv. Wassilewskija</strain>
    </source>
</reference>
<reference key="14">
    <citation type="journal article" date="2010" name="Plant Physiol.">
        <title>Modulation of transcriptome and metabolome of tobacco by Arabidopsis transcription factor, AtMYB12, leads to insect resistance.</title>
        <authorList>
            <person name="Misra P."/>
            <person name="Pandey A."/>
            <person name="Tiwari M."/>
            <person name="Chandrashekar K."/>
            <person name="Sidhu O.P."/>
            <person name="Asif M.H."/>
            <person name="Chakrabarty D."/>
            <person name="Singh P.K."/>
            <person name="Trivedi P.K."/>
            <person name="Nath P."/>
            <person name="Tuli R."/>
        </authorList>
    </citation>
    <scope>BIOTECHNOLOGY</scope>
</reference>
<organism>
    <name type="scientific">Arabidopsis thaliana</name>
    <name type="common">Mouse-ear cress</name>
    <dbReference type="NCBI Taxonomy" id="3702"/>
    <lineage>
        <taxon>Eukaryota</taxon>
        <taxon>Viridiplantae</taxon>
        <taxon>Streptophyta</taxon>
        <taxon>Embryophyta</taxon>
        <taxon>Tracheophyta</taxon>
        <taxon>Spermatophyta</taxon>
        <taxon>Magnoliopsida</taxon>
        <taxon>eudicotyledons</taxon>
        <taxon>Gunneridae</taxon>
        <taxon>Pentapetalae</taxon>
        <taxon>rosids</taxon>
        <taxon>malvids</taxon>
        <taxon>Brassicales</taxon>
        <taxon>Brassicaceae</taxon>
        <taxon>Camelineae</taxon>
        <taxon>Arabidopsis</taxon>
    </lineage>
</organism>
<comment type="function">
    <text evidence="3 5 7 9">Flavonol-specific transcription activator involved in the regulation of several genes of flavonoid biosynthesis. Activates the expression of CHS, CHI, F3H and FLS1. Controls flavonol biosynthesis mainly in the root (PubMed:17419845, PubMed:20731781). Confers tolerance to UV-B (PubMed:19895401).</text>
</comment>
<comment type="interaction">
    <interactant intactId="EBI-15191921">
        <id>O22264</id>
    </interactant>
    <interactant intactId="EBI-15191923">
        <id>Q9FGD2</id>
        <label>At5g66980</label>
    </interactant>
    <organismsDiffer>false</organismsDiffer>
    <experiments>4</experiments>
</comment>
<comment type="subcellular location">
    <subcellularLocation>
        <location evidence="1">Nucleus</location>
    </subcellularLocation>
</comment>
<comment type="tissue specificity">
    <text evidence="5 10">Expressed in stems and flower buds (PubMed:9839469). Expressed in seedlings, roots, cotyledons and apical meristems (PubMed:17419845).</text>
</comment>
<comment type="developmental stage">
    <text evidence="5">In seedlings, predominantly expressed in roots. Expressed predominantly in the root, in the vascular tissue of the hypocotyl-root transition zone and, at low levels, at the region of apical meristem and the apex of cotyledons.</text>
</comment>
<comment type="induction">
    <text evidence="4 7 10">By nitrogen deficiency, sucrose and UV LIGHT (PubMed:17053893, PubMed:9839469). Triggered by HY5 in response to light and UV-B (PubMed:19895401).</text>
</comment>
<comment type="disruption phenotype">
    <text evidence="5 7 9">Reduced flavonols levels in roots. The double mutant myb12 myb111 and triple mutant myb11 myb12 myb111 accumulate less flavonols in roots, leaves, stems, inflorescence, and siliques. The double mutant myb11 myb12 is specifically altered in flavonols content of siliques and roots (PubMed:20731781). The triple mutant myb11 myb12 myb111 is impaired in flavonols biosynthesis and exhibits a reduced UV-B tolerance (PubMed:17419845, PubMed:19895401).</text>
</comment>
<comment type="biotechnology">
    <text evidence="6 8">Promotes flavonoid biosynthesis when expressed in tobacco (Nicotiana tabacum) and tomato (Solanum lycopersicum) through up-regulation of the biosynthetic genes. Tobacco plants exhibit increased insect (Spodoptera litura and Helicoverpa armigera) resistance due to enhanced accumulation of rutin.</text>
</comment>
<comment type="sequence caution" evidence="13">
    <conflict type="frameshift">
        <sequence resource="EMBL-CDS" id="ABB03913"/>
    </conflict>
</comment>
<protein>
    <recommendedName>
        <fullName evidence="12">Transcription factor MYB12</fullName>
    </recommendedName>
    <alternativeName>
        <fullName evidence="12">Myb-related protein 12</fullName>
        <shortName evidence="12">AtMYB12</shortName>
    </alternativeName>
    <alternativeName>
        <fullName evidence="11">Protein PRODUCTION OF FLAVONOL GLYCOSIDES 1</fullName>
    </alternativeName>
</protein>
<dbReference type="EMBL" id="AF062864">
    <property type="protein sequence ID" value="AAC83586.1"/>
    <property type="molecule type" value="mRNA"/>
</dbReference>
<dbReference type="EMBL" id="DQ224277">
    <property type="protein sequence ID" value="ABB03913.1"/>
    <property type="status" value="ALT_FRAME"/>
    <property type="molecule type" value="Genomic_DNA"/>
</dbReference>
<dbReference type="EMBL" id="AY519580">
    <property type="protein sequence ID" value="AAS10050.1"/>
    <property type="molecule type" value="mRNA"/>
</dbReference>
<dbReference type="EMBL" id="AC002535">
    <property type="protein sequence ID" value="AAC62864.1"/>
    <property type="molecule type" value="Genomic_DNA"/>
</dbReference>
<dbReference type="EMBL" id="CP002685">
    <property type="protein sequence ID" value="AEC10843.1"/>
    <property type="molecule type" value="Genomic_DNA"/>
</dbReference>
<dbReference type="EMBL" id="AY060588">
    <property type="protein sequence ID" value="AAL31213.1"/>
    <property type="molecule type" value="mRNA"/>
</dbReference>
<dbReference type="EMBL" id="AY142067">
    <property type="protein sequence ID" value="AAM98331.1"/>
    <property type="molecule type" value="mRNA"/>
</dbReference>
<dbReference type="PIR" id="T00438">
    <property type="entry name" value="T00438"/>
</dbReference>
<dbReference type="PIR" id="T51636">
    <property type="entry name" value="T51636"/>
</dbReference>
<dbReference type="RefSeq" id="NP_182268.1">
    <property type="nucleotide sequence ID" value="NM_130314.4"/>
</dbReference>
<dbReference type="SMR" id="O22264"/>
<dbReference type="BioGRID" id="4694">
    <property type="interactions" value="16"/>
</dbReference>
<dbReference type="FunCoup" id="O22264">
    <property type="interactions" value="286"/>
</dbReference>
<dbReference type="IntAct" id="O22264">
    <property type="interactions" value="6"/>
</dbReference>
<dbReference type="STRING" id="3702.O22264"/>
<dbReference type="PaxDb" id="3702-AT2G47460.1"/>
<dbReference type="EnsemblPlants" id="AT2G47460.1">
    <property type="protein sequence ID" value="AT2G47460.1"/>
    <property type="gene ID" value="AT2G47460"/>
</dbReference>
<dbReference type="GeneID" id="819359"/>
<dbReference type="Gramene" id="AT2G47460.1">
    <property type="protein sequence ID" value="AT2G47460.1"/>
    <property type="gene ID" value="AT2G47460"/>
</dbReference>
<dbReference type="KEGG" id="ath:AT2G47460"/>
<dbReference type="Araport" id="AT2G47460"/>
<dbReference type="TAIR" id="AT2G47460">
    <property type="gene designation" value="MYB12"/>
</dbReference>
<dbReference type="eggNOG" id="KOG0048">
    <property type="taxonomic scope" value="Eukaryota"/>
</dbReference>
<dbReference type="HOGENOM" id="CLU_028567_6_3_1"/>
<dbReference type="InParanoid" id="O22264"/>
<dbReference type="OMA" id="PCDYYGD"/>
<dbReference type="PhylomeDB" id="O22264"/>
<dbReference type="PRO" id="PR:O22264"/>
<dbReference type="Proteomes" id="UP000006548">
    <property type="component" value="Chromosome 2"/>
</dbReference>
<dbReference type="ExpressionAtlas" id="O22264">
    <property type="expression patterns" value="baseline and differential"/>
</dbReference>
<dbReference type="GO" id="GO:0005634">
    <property type="term" value="C:nucleus"/>
    <property type="evidence" value="ECO:0000314"/>
    <property type="project" value="TAIR"/>
</dbReference>
<dbReference type="GO" id="GO:0003700">
    <property type="term" value="F:DNA-binding transcription factor activity"/>
    <property type="evidence" value="ECO:0000250"/>
    <property type="project" value="TAIR"/>
</dbReference>
<dbReference type="GO" id="GO:0000976">
    <property type="term" value="F:transcription cis-regulatory region binding"/>
    <property type="evidence" value="ECO:0000353"/>
    <property type="project" value="TAIR"/>
</dbReference>
<dbReference type="GO" id="GO:0009813">
    <property type="term" value="P:flavonoid biosynthetic process"/>
    <property type="evidence" value="ECO:0000315"/>
    <property type="project" value="TAIR"/>
</dbReference>
<dbReference type="GO" id="GO:0051555">
    <property type="term" value="P:flavonol biosynthetic process"/>
    <property type="evidence" value="ECO:0000315"/>
    <property type="project" value="UniProtKB"/>
</dbReference>
<dbReference type="GO" id="GO:0045893">
    <property type="term" value="P:positive regulation of DNA-templated transcription"/>
    <property type="evidence" value="ECO:0000314"/>
    <property type="project" value="TAIR"/>
</dbReference>
<dbReference type="GO" id="GO:1900386">
    <property type="term" value="P:positive regulation of flavonol biosynthetic process"/>
    <property type="evidence" value="ECO:0000315"/>
    <property type="project" value="UniProtKB"/>
</dbReference>
<dbReference type="GO" id="GO:0009733">
    <property type="term" value="P:response to auxin"/>
    <property type="evidence" value="ECO:0000270"/>
    <property type="project" value="TAIR"/>
</dbReference>
<dbReference type="GO" id="GO:0009723">
    <property type="term" value="P:response to ethylene"/>
    <property type="evidence" value="ECO:0000270"/>
    <property type="project" value="TAIR"/>
</dbReference>
<dbReference type="GO" id="GO:0009416">
    <property type="term" value="P:response to light stimulus"/>
    <property type="evidence" value="ECO:0000270"/>
    <property type="project" value="UniProtKB"/>
</dbReference>
<dbReference type="GO" id="GO:0009651">
    <property type="term" value="P:response to salt stress"/>
    <property type="evidence" value="ECO:0000315"/>
    <property type="project" value="TAIR"/>
</dbReference>
<dbReference type="GO" id="GO:0010224">
    <property type="term" value="P:response to UV-B"/>
    <property type="evidence" value="ECO:0000315"/>
    <property type="project" value="UniProtKB"/>
</dbReference>
<dbReference type="CDD" id="cd00167">
    <property type="entry name" value="SANT"/>
    <property type="match status" value="2"/>
</dbReference>
<dbReference type="FunFam" id="1.10.10.60:FF:000121">
    <property type="entry name" value="Myb transcription factor"/>
    <property type="match status" value="1"/>
</dbReference>
<dbReference type="FunFam" id="1.10.10.60:FF:000231">
    <property type="entry name" value="Myb transcription factor"/>
    <property type="match status" value="1"/>
</dbReference>
<dbReference type="Gene3D" id="1.10.10.60">
    <property type="entry name" value="Homeodomain-like"/>
    <property type="match status" value="2"/>
</dbReference>
<dbReference type="InterPro" id="IPR009057">
    <property type="entry name" value="Homeodomain-like_sf"/>
</dbReference>
<dbReference type="InterPro" id="IPR017930">
    <property type="entry name" value="Myb_dom"/>
</dbReference>
<dbReference type="InterPro" id="IPR015495">
    <property type="entry name" value="Myb_TF_plants"/>
</dbReference>
<dbReference type="InterPro" id="IPR001005">
    <property type="entry name" value="SANT/Myb"/>
</dbReference>
<dbReference type="PANTHER" id="PTHR47999:SF111">
    <property type="entry name" value="TRANSCRIPTION FACTOR MYB11-RELATED"/>
    <property type="match status" value="1"/>
</dbReference>
<dbReference type="PANTHER" id="PTHR47999">
    <property type="entry name" value="TRANSCRIPTION FACTOR MYB8-RELATED-RELATED"/>
    <property type="match status" value="1"/>
</dbReference>
<dbReference type="Pfam" id="PF00249">
    <property type="entry name" value="Myb_DNA-binding"/>
    <property type="match status" value="2"/>
</dbReference>
<dbReference type="SMART" id="SM00717">
    <property type="entry name" value="SANT"/>
    <property type="match status" value="2"/>
</dbReference>
<dbReference type="SUPFAM" id="SSF46689">
    <property type="entry name" value="Homeodomain-like"/>
    <property type="match status" value="1"/>
</dbReference>
<dbReference type="PROSITE" id="PS51294">
    <property type="entry name" value="HTH_MYB"/>
    <property type="match status" value="2"/>
</dbReference>
<accession>O22264</accession>
<accession>Q38IY2</accession>
<accession>Q9SBG6</accession>
<keyword id="KW-0010">Activator</keyword>
<keyword id="KW-0238">DNA-binding</keyword>
<keyword id="KW-0284">Flavonoid biosynthesis</keyword>
<keyword id="KW-0539">Nucleus</keyword>
<keyword id="KW-1185">Reference proteome</keyword>
<keyword id="KW-0677">Repeat</keyword>
<keyword id="KW-0804">Transcription</keyword>
<keyword id="KW-0805">Transcription regulation</keyword>
<proteinExistence type="evidence at protein level"/>
<evidence type="ECO:0000255" key="1">
    <source>
        <dbReference type="PROSITE-ProRule" id="PRU00625"/>
    </source>
</evidence>
<evidence type="ECO:0000256" key="2">
    <source>
        <dbReference type="SAM" id="MobiDB-lite"/>
    </source>
</evidence>
<evidence type="ECO:0000269" key="3">
    <source>
    </source>
</evidence>
<evidence type="ECO:0000269" key="4">
    <source>
    </source>
</evidence>
<evidence type="ECO:0000269" key="5">
    <source>
    </source>
</evidence>
<evidence type="ECO:0000269" key="6">
    <source>
    </source>
</evidence>
<evidence type="ECO:0000269" key="7">
    <source>
    </source>
</evidence>
<evidence type="ECO:0000269" key="8">
    <source>
    </source>
</evidence>
<evidence type="ECO:0000269" key="9">
    <source>
    </source>
</evidence>
<evidence type="ECO:0000269" key="10">
    <source>
    </source>
</evidence>
<evidence type="ECO:0000303" key="11">
    <source>
    </source>
</evidence>
<evidence type="ECO:0000303" key="12">
    <source>
    </source>
</evidence>
<evidence type="ECO:0000305" key="13"/>
<evidence type="ECO:0000312" key="14">
    <source>
        <dbReference type="Araport" id="AT2G47460"/>
    </source>
</evidence>
<evidence type="ECO:0000312" key="15">
    <source>
        <dbReference type="EMBL" id="AAC62864.1"/>
    </source>
</evidence>
<feature type="chain" id="PRO_0000285269" description="Transcription factor MYB12">
    <location>
        <begin position="1"/>
        <end position="371"/>
    </location>
</feature>
<feature type="domain" description="HTH myb-type 1" evidence="1">
    <location>
        <begin position="9"/>
        <end position="61"/>
    </location>
</feature>
<feature type="domain" description="HTH myb-type 2" evidence="1">
    <location>
        <begin position="62"/>
        <end position="116"/>
    </location>
</feature>
<feature type="DNA-binding region" description="H-T-H motif" evidence="1">
    <location>
        <begin position="37"/>
        <end position="61"/>
    </location>
</feature>
<feature type="DNA-binding region" description="H-T-H motif" evidence="1">
    <location>
        <begin position="89"/>
        <end position="112"/>
    </location>
</feature>
<feature type="region of interest" description="Disordered" evidence="2">
    <location>
        <begin position="136"/>
        <end position="183"/>
    </location>
</feature>
<feature type="compositionally biased region" description="Basic residues" evidence="2">
    <location>
        <begin position="146"/>
        <end position="172"/>
    </location>
</feature>
<feature type="sequence conflict" description="In Ref. 1; AAC83586." evidence="13" ref="1">
    <original>S</original>
    <variation>G</variation>
    <location>
        <position position="154"/>
    </location>
</feature>
<name>MYB12_ARATH</name>